<protein>
    <recommendedName>
        <fullName evidence="1">Probable septum site-determining protein MinC</fullName>
    </recommendedName>
</protein>
<name>MINC_RHOP5</name>
<reference key="1">
    <citation type="submission" date="2006-09" db="EMBL/GenBank/DDBJ databases">
        <title>Complete sequence of Rhodopseudomonas palustris BisA53.</title>
        <authorList>
            <consortium name="US DOE Joint Genome Institute"/>
            <person name="Copeland A."/>
            <person name="Lucas S."/>
            <person name="Lapidus A."/>
            <person name="Barry K."/>
            <person name="Detter J.C."/>
            <person name="Glavina del Rio T."/>
            <person name="Hammon N."/>
            <person name="Israni S."/>
            <person name="Dalin E."/>
            <person name="Tice H."/>
            <person name="Pitluck S."/>
            <person name="Chain P."/>
            <person name="Malfatti S."/>
            <person name="Shin M."/>
            <person name="Vergez L."/>
            <person name="Schmutz J."/>
            <person name="Larimer F."/>
            <person name="Land M."/>
            <person name="Hauser L."/>
            <person name="Pelletier D.A."/>
            <person name="Kyrpides N."/>
            <person name="Kim E."/>
            <person name="Harwood C.S."/>
            <person name="Oda Y."/>
            <person name="Richardson P."/>
        </authorList>
    </citation>
    <scope>NUCLEOTIDE SEQUENCE [LARGE SCALE GENOMIC DNA]</scope>
    <source>
        <strain>BisA53</strain>
    </source>
</reference>
<keyword id="KW-0131">Cell cycle</keyword>
<keyword id="KW-0132">Cell division</keyword>
<keyword id="KW-0717">Septation</keyword>
<accession>Q07LX6</accession>
<comment type="function">
    <text evidence="1">Cell division inhibitor that blocks the formation of polar Z ring septums. Rapidly oscillates between the poles of the cell to destabilize FtsZ filaments that have formed before they mature into polar Z rings. Prevents FtsZ polymerization.</text>
</comment>
<comment type="subunit">
    <text evidence="1">Interacts with MinD and FtsZ.</text>
</comment>
<comment type="similarity">
    <text evidence="1">Belongs to the MinC family.</text>
</comment>
<feature type="chain" id="PRO_1000047851" description="Probable septum site-determining protein MinC">
    <location>
        <begin position="1"/>
        <end position="230"/>
    </location>
</feature>
<organism>
    <name type="scientific">Rhodopseudomonas palustris (strain BisA53)</name>
    <dbReference type="NCBI Taxonomy" id="316055"/>
    <lineage>
        <taxon>Bacteria</taxon>
        <taxon>Pseudomonadati</taxon>
        <taxon>Pseudomonadota</taxon>
        <taxon>Alphaproteobacteria</taxon>
        <taxon>Hyphomicrobiales</taxon>
        <taxon>Nitrobacteraceae</taxon>
        <taxon>Rhodopseudomonas</taxon>
    </lineage>
</organism>
<proteinExistence type="inferred from homology"/>
<evidence type="ECO:0000255" key="1">
    <source>
        <dbReference type="HAMAP-Rule" id="MF_00267"/>
    </source>
</evidence>
<sequence>MLAKVEPKRQLARFRGRSYVAFVFAPVVPIADWLEEIDSTIERSSGFFVGRPVVLDLSAVDLSCSGITHLLSSLEARNIRVLGIEGVNGSQLTPSMPPLLTGGRHCVLEHIETDKAEAKPRASSLLLKQPVRSGQSVVFTEGDVTVLGSVGSGAEIVAGGSIHIYGTLRGRAMAGVNGNLDARIYCQKIEAELLAIDGYYQTAENIDSTLRSRPVQAWLDDETLKITPLI</sequence>
<gene>
    <name evidence="1" type="primary">minC</name>
    <name type="ordered locus">RPE_3121</name>
</gene>
<dbReference type="EMBL" id="CP000463">
    <property type="protein sequence ID" value="ABJ07058.1"/>
    <property type="molecule type" value="Genomic_DNA"/>
</dbReference>
<dbReference type="SMR" id="Q07LX6"/>
<dbReference type="STRING" id="316055.RPE_3121"/>
<dbReference type="KEGG" id="rpe:RPE_3121"/>
<dbReference type="eggNOG" id="COG0850">
    <property type="taxonomic scope" value="Bacteria"/>
</dbReference>
<dbReference type="HOGENOM" id="CLU_067812_1_0_5"/>
<dbReference type="OrthoDB" id="9794530at2"/>
<dbReference type="GO" id="GO:0000902">
    <property type="term" value="P:cell morphogenesis"/>
    <property type="evidence" value="ECO:0007669"/>
    <property type="project" value="InterPro"/>
</dbReference>
<dbReference type="GO" id="GO:0000917">
    <property type="term" value="P:division septum assembly"/>
    <property type="evidence" value="ECO:0007669"/>
    <property type="project" value="UniProtKB-KW"/>
</dbReference>
<dbReference type="GO" id="GO:1901891">
    <property type="term" value="P:regulation of cell septum assembly"/>
    <property type="evidence" value="ECO:0007669"/>
    <property type="project" value="InterPro"/>
</dbReference>
<dbReference type="Gene3D" id="2.160.20.70">
    <property type="match status" value="1"/>
</dbReference>
<dbReference type="Gene3D" id="3.30.70.260">
    <property type="match status" value="1"/>
</dbReference>
<dbReference type="HAMAP" id="MF_00267">
    <property type="entry name" value="MinC"/>
    <property type="match status" value="1"/>
</dbReference>
<dbReference type="InterPro" id="IPR016098">
    <property type="entry name" value="CAP/MinC_C"/>
</dbReference>
<dbReference type="InterPro" id="IPR013033">
    <property type="entry name" value="MinC"/>
</dbReference>
<dbReference type="InterPro" id="IPR036145">
    <property type="entry name" value="MinC_C_sf"/>
</dbReference>
<dbReference type="InterPro" id="IPR005526">
    <property type="entry name" value="Septum_form_inhib_MinC_C"/>
</dbReference>
<dbReference type="NCBIfam" id="TIGR01222">
    <property type="entry name" value="minC"/>
    <property type="match status" value="1"/>
</dbReference>
<dbReference type="PANTHER" id="PTHR34108">
    <property type="entry name" value="SEPTUM SITE-DETERMINING PROTEIN MINC"/>
    <property type="match status" value="1"/>
</dbReference>
<dbReference type="PANTHER" id="PTHR34108:SF1">
    <property type="entry name" value="SEPTUM SITE-DETERMINING PROTEIN MINC"/>
    <property type="match status" value="1"/>
</dbReference>
<dbReference type="Pfam" id="PF03775">
    <property type="entry name" value="MinC_C"/>
    <property type="match status" value="1"/>
</dbReference>
<dbReference type="SUPFAM" id="SSF63848">
    <property type="entry name" value="Cell-division inhibitor MinC, C-terminal domain"/>
    <property type="match status" value="1"/>
</dbReference>